<dbReference type="EMBL" id="Y11997">
    <property type="protein sequence ID" value="CAA72722.1"/>
    <property type="molecule type" value="mRNA"/>
</dbReference>
<dbReference type="EMBL" id="AC005785">
    <property type="protein sequence ID" value="AAC62838.1"/>
    <property type="molecule type" value="Genomic_DNA"/>
</dbReference>
<dbReference type="CCDS" id="CCDS12329.1"/>
<dbReference type="PIR" id="T13161">
    <property type="entry name" value="T13161"/>
</dbReference>
<dbReference type="RefSeq" id="NP_005849.1">
    <property type="nucleotide sequence ID" value="NM_005858.4"/>
</dbReference>
<dbReference type="BioGRID" id="115561">
    <property type="interactions" value="196"/>
</dbReference>
<dbReference type="CORUM" id="O43823"/>
<dbReference type="DIP" id="DIP-38194N"/>
<dbReference type="FunCoup" id="O43823">
    <property type="interactions" value="3328"/>
</dbReference>
<dbReference type="IntAct" id="O43823">
    <property type="interactions" value="106"/>
</dbReference>
<dbReference type="MINT" id="O43823"/>
<dbReference type="STRING" id="9606.ENSP00000269701"/>
<dbReference type="GlyCosmos" id="O43823">
    <property type="glycosylation" value="4 sites, 2 glycans"/>
</dbReference>
<dbReference type="GlyGen" id="O43823">
    <property type="glycosylation" value="6 sites, 2 O-linked glycans (5 sites)"/>
</dbReference>
<dbReference type="iPTMnet" id="O43823"/>
<dbReference type="MetOSite" id="O43823"/>
<dbReference type="PhosphoSitePlus" id="O43823"/>
<dbReference type="SwissPalm" id="O43823"/>
<dbReference type="BioMuta" id="AKAP8"/>
<dbReference type="jPOST" id="O43823"/>
<dbReference type="MassIVE" id="O43823"/>
<dbReference type="PaxDb" id="9606-ENSP00000269701"/>
<dbReference type="PeptideAtlas" id="O43823"/>
<dbReference type="ProteomicsDB" id="49189"/>
<dbReference type="Pumba" id="O43823"/>
<dbReference type="Antibodypedia" id="1427">
    <property type="antibodies" value="354 antibodies from 35 providers"/>
</dbReference>
<dbReference type="DNASU" id="10270"/>
<dbReference type="Ensembl" id="ENST00000269701.7">
    <property type="protein sequence ID" value="ENSP00000269701.1"/>
    <property type="gene ID" value="ENSG00000105127.10"/>
</dbReference>
<dbReference type="GeneID" id="10270"/>
<dbReference type="KEGG" id="hsa:10270"/>
<dbReference type="MANE-Select" id="ENST00000269701.7">
    <property type="protein sequence ID" value="ENSP00000269701.1"/>
    <property type="RefSeq nucleotide sequence ID" value="NM_005858.4"/>
    <property type="RefSeq protein sequence ID" value="NP_005849.1"/>
</dbReference>
<dbReference type="UCSC" id="uc002nav.4">
    <property type="organism name" value="human"/>
</dbReference>
<dbReference type="AGR" id="HGNC:378"/>
<dbReference type="CTD" id="10270"/>
<dbReference type="DisGeNET" id="10270"/>
<dbReference type="GeneCards" id="AKAP8"/>
<dbReference type="HGNC" id="HGNC:378">
    <property type="gene designation" value="AKAP8"/>
</dbReference>
<dbReference type="HPA" id="ENSG00000105127">
    <property type="expression patterns" value="Low tissue specificity"/>
</dbReference>
<dbReference type="MalaCards" id="AKAP8"/>
<dbReference type="MIM" id="604692">
    <property type="type" value="gene"/>
</dbReference>
<dbReference type="neXtProt" id="NX_O43823"/>
<dbReference type="OpenTargets" id="ENSG00000105127"/>
<dbReference type="PharmGKB" id="PA24672"/>
<dbReference type="VEuPathDB" id="HostDB:ENSG00000105127"/>
<dbReference type="eggNOG" id="ENOG502QZY2">
    <property type="taxonomic scope" value="Eukaryota"/>
</dbReference>
<dbReference type="GeneTree" id="ENSGT00530000063777"/>
<dbReference type="HOGENOM" id="CLU_024193_1_0_1"/>
<dbReference type="InParanoid" id="O43823"/>
<dbReference type="OMA" id="WTELNYV"/>
<dbReference type="OrthoDB" id="8923935at2759"/>
<dbReference type="PAN-GO" id="O43823">
    <property type="GO annotations" value="3 GO annotations based on evolutionary models"/>
</dbReference>
<dbReference type="PhylomeDB" id="O43823"/>
<dbReference type="TreeFam" id="TF105407"/>
<dbReference type="PathwayCommons" id="O43823"/>
<dbReference type="SignaLink" id="O43823"/>
<dbReference type="SIGNOR" id="O43823"/>
<dbReference type="BioGRID-ORCS" id="10270">
    <property type="hits" value="11 hits in 1170 CRISPR screens"/>
</dbReference>
<dbReference type="CD-CODE" id="91857CE7">
    <property type="entry name" value="Nucleolus"/>
</dbReference>
<dbReference type="ChiTaRS" id="AKAP8">
    <property type="organism name" value="human"/>
</dbReference>
<dbReference type="GeneWiki" id="AKAP8"/>
<dbReference type="GenomeRNAi" id="10270"/>
<dbReference type="Pharos" id="O43823">
    <property type="development level" value="Tbio"/>
</dbReference>
<dbReference type="PRO" id="PR:O43823"/>
<dbReference type="Proteomes" id="UP000005640">
    <property type="component" value="Chromosome 19"/>
</dbReference>
<dbReference type="RNAct" id="O43823">
    <property type="molecule type" value="protein"/>
</dbReference>
<dbReference type="Bgee" id="ENSG00000105127">
    <property type="expression patterns" value="Expressed in sural nerve and 196 other cell types or tissues"/>
</dbReference>
<dbReference type="ExpressionAtlas" id="O43823">
    <property type="expression patterns" value="baseline and differential"/>
</dbReference>
<dbReference type="GO" id="GO:0000793">
    <property type="term" value="C:condensed chromosome"/>
    <property type="evidence" value="ECO:0007669"/>
    <property type="project" value="Ensembl"/>
</dbReference>
<dbReference type="GO" id="GO:0005737">
    <property type="term" value="C:cytoplasm"/>
    <property type="evidence" value="ECO:0007669"/>
    <property type="project" value="UniProtKB-SubCell"/>
</dbReference>
<dbReference type="GO" id="GO:0001939">
    <property type="term" value="C:female pronucleus"/>
    <property type="evidence" value="ECO:0007669"/>
    <property type="project" value="Ensembl"/>
</dbReference>
<dbReference type="GO" id="GO:0016020">
    <property type="term" value="C:membrane"/>
    <property type="evidence" value="ECO:0007005"/>
    <property type="project" value="UniProtKB"/>
</dbReference>
<dbReference type="GO" id="GO:0016363">
    <property type="term" value="C:nuclear matrix"/>
    <property type="evidence" value="ECO:0000250"/>
    <property type="project" value="UniProtKB"/>
</dbReference>
<dbReference type="GO" id="GO:0005730">
    <property type="term" value="C:nucleolus"/>
    <property type="evidence" value="ECO:0000314"/>
    <property type="project" value="CACAO"/>
</dbReference>
<dbReference type="GO" id="GO:0005654">
    <property type="term" value="C:nucleoplasm"/>
    <property type="evidence" value="ECO:0000314"/>
    <property type="project" value="HPA"/>
</dbReference>
<dbReference type="GO" id="GO:0005634">
    <property type="term" value="C:nucleus"/>
    <property type="evidence" value="ECO:0000318"/>
    <property type="project" value="GO_Central"/>
</dbReference>
<dbReference type="GO" id="GO:0003690">
    <property type="term" value="F:double-stranded DNA binding"/>
    <property type="evidence" value="ECO:0007669"/>
    <property type="project" value="Ensembl"/>
</dbReference>
<dbReference type="GO" id="GO:0042826">
    <property type="term" value="F:histone deacetylase binding"/>
    <property type="evidence" value="ECO:0000314"/>
    <property type="project" value="UniProtKB"/>
</dbReference>
<dbReference type="GO" id="GO:0051059">
    <property type="term" value="F:NF-kappaB binding"/>
    <property type="evidence" value="ECO:0007669"/>
    <property type="project" value="Ensembl"/>
</dbReference>
<dbReference type="GO" id="GO:0034237">
    <property type="term" value="F:protein kinase A regulatory subunit binding"/>
    <property type="evidence" value="ECO:0000353"/>
    <property type="project" value="UniProtKB"/>
</dbReference>
<dbReference type="GO" id="GO:0003723">
    <property type="term" value="F:RNA binding"/>
    <property type="evidence" value="ECO:0007005"/>
    <property type="project" value="UniProtKB"/>
</dbReference>
<dbReference type="GO" id="GO:0008270">
    <property type="term" value="F:zinc ion binding"/>
    <property type="evidence" value="ECO:0007669"/>
    <property type="project" value="UniProtKB-KW"/>
</dbReference>
<dbReference type="GO" id="GO:0044839">
    <property type="term" value="P:cell cycle G2/M phase transition"/>
    <property type="evidence" value="ECO:0000315"/>
    <property type="project" value="UniProtKB"/>
</dbReference>
<dbReference type="GO" id="GO:0071222">
    <property type="term" value="P:cellular response to lipopolysaccharide"/>
    <property type="evidence" value="ECO:0007669"/>
    <property type="project" value="Ensembl"/>
</dbReference>
<dbReference type="GO" id="GO:0071380">
    <property type="term" value="P:cellular response to prostaglandin E stimulus"/>
    <property type="evidence" value="ECO:0007669"/>
    <property type="project" value="Ensembl"/>
</dbReference>
<dbReference type="GO" id="GO:0045087">
    <property type="term" value="P:innate immune response"/>
    <property type="evidence" value="ECO:0007669"/>
    <property type="project" value="UniProtKB-KW"/>
</dbReference>
<dbReference type="GO" id="GO:0000278">
    <property type="term" value="P:mitotic cell cycle"/>
    <property type="evidence" value="ECO:0000304"/>
    <property type="project" value="ProtInc"/>
</dbReference>
<dbReference type="GO" id="GO:0007076">
    <property type="term" value="P:mitotic chromosome condensation"/>
    <property type="evidence" value="ECO:0007669"/>
    <property type="project" value="Ensembl"/>
</dbReference>
<dbReference type="GO" id="GO:0032720">
    <property type="term" value="P:negative regulation of tumor necrosis factor production"/>
    <property type="evidence" value="ECO:0007669"/>
    <property type="project" value="Ensembl"/>
</dbReference>
<dbReference type="GO" id="GO:0015031">
    <property type="term" value="P:protein transport"/>
    <property type="evidence" value="ECO:0007669"/>
    <property type="project" value="UniProtKB-KW"/>
</dbReference>
<dbReference type="GO" id="GO:0007165">
    <property type="term" value="P:signal transduction"/>
    <property type="evidence" value="ECO:0000304"/>
    <property type="project" value="ProtInc"/>
</dbReference>
<dbReference type="InterPro" id="IPR007071">
    <property type="entry name" value="AKAP95"/>
</dbReference>
<dbReference type="InterPro" id="IPR034736">
    <property type="entry name" value="ZF_C2H2_AKAP95"/>
</dbReference>
<dbReference type="PANTHER" id="PTHR12190:SF6">
    <property type="entry name" value="A-KINASE ANCHOR PROTEIN 8"/>
    <property type="match status" value="1"/>
</dbReference>
<dbReference type="PANTHER" id="PTHR12190">
    <property type="entry name" value="A-KINASE ANCHOR PROTEIN AKAP 8"/>
    <property type="match status" value="1"/>
</dbReference>
<dbReference type="Pfam" id="PF04988">
    <property type="entry name" value="AKAP95"/>
    <property type="match status" value="1"/>
</dbReference>
<dbReference type="SUPFAM" id="SSF56935">
    <property type="entry name" value="Porins"/>
    <property type="match status" value="1"/>
</dbReference>
<dbReference type="PROSITE" id="PS51799">
    <property type="entry name" value="ZF_C2H2_AKAP95"/>
    <property type="match status" value="2"/>
</dbReference>
<protein>
    <recommendedName>
        <fullName>A-kinase anchor protein 8</fullName>
        <shortName>AKAP-8</shortName>
    </recommendedName>
    <alternativeName>
        <fullName>A-kinase anchor protein 95 kDa</fullName>
        <shortName>AKAP 95</shortName>
    </alternativeName>
</protein>
<proteinExistence type="evidence at protein level"/>
<sequence>MDQGYGGYGAWSAGPANTQGAYGTGVASWQGYENYNYYGAQNTSVTTGATYSYGPASWEAAKANDGGLAAGAPAMHMASYGPEPCTDNSDSLIAKINQRLDMMSKEGGRGGSGGGGEGIQDRESSFRFQPFESYDSRPCLPEHNPYRPSYSYDYEFDLGSDRNGSFGGQYSECRDPARERGSLDGFMRGRGQGRFQDRSNPGTFMRSDPFVPPAASSEPLSTPWNELNYVGGRGLGGPSPSRPPPSLFSQSMAPDYGVMGMQGAGGYDSTMPYGCGRSQPRMRDRDRPKRRGFDRFGPDGTGRKRKQFQLYEEPDTKLARVDSEGDFSENDDAAGDFRSGDEEFKGEDELCDSGRQRGEKEDEDEDVKKRREKQRRRDRTRDRAADRIQFACSVCKFRSFDDEEIQKHLQSKFHKETLRFISTKLPDKTVEFLQEYIVNRNKKIEKRRQELMEKETAKPKPDPFKGIGQEHFFKKIEAAHCLACDMLIPAQPQLLQRHLHSVDHNHNRRLAAEQFKKTSLHVAKSVLNNRHIVKMLEKYLKGEDPFTSETVDPEMEGDDNLGGEDKKETPEEVAADVLAEVITAAVRAVDGEGAPAPESSGEPAEDEGPTDTAEAGSDPQAEQLLEEQVPCGTAHEKGVPKARSEAAEAGNGAETMAAEAESAQTRVAPAPAAADAEVEQTDAESKDAVPTE</sequence>
<reference key="1">
    <citation type="journal article" date="1998" name="Exp. Cell Res.">
        <title>Molecular cloning, chromosomal localization, and cell cycle-dependent subcellular distribution of the A-kinase anchoring protein, AKAP95.</title>
        <authorList>
            <person name="Eide T."/>
            <person name="Coghlan V."/>
            <person name="Oerstavik S."/>
            <person name="Holsve C."/>
            <person name="Solberg R."/>
            <person name="Skaelhegg B.S."/>
            <person name="Lamb N.J.C."/>
            <person name="Langeberg L."/>
            <person name="Fernandez A."/>
            <person name="Scott J.D."/>
            <person name="Jahnsen T."/>
            <person name="Tasken K."/>
        </authorList>
    </citation>
    <scope>NUCLEOTIDE SEQUENCE [MRNA]</scope>
    <scope>INTERACTION WITH PRKAR2A</scope>
    <scope>FUNCTION</scope>
    <source>
        <tissue>Cerebellum</tissue>
        <tissue>Testis</tissue>
    </source>
</reference>
<reference key="2">
    <citation type="journal article" date="2004" name="Nature">
        <title>The DNA sequence and biology of human chromosome 19.</title>
        <authorList>
            <person name="Grimwood J."/>
            <person name="Gordon L.A."/>
            <person name="Olsen A.S."/>
            <person name="Terry A."/>
            <person name="Schmutz J."/>
            <person name="Lamerdin J.E."/>
            <person name="Hellsten U."/>
            <person name="Goodstein D."/>
            <person name="Couronne O."/>
            <person name="Tran-Gyamfi M."/>
            <person name="Aerts A."/>
            <person name="Altherr M."/>
            <person name="Ashworth L."/>
            <person name="Bajorek E."/>
            <person name="Black S."/>
            <person name="Branscomb E."/>
            <person name="Caenepeel S."/>
            <person name="Carrano A.V."/>
            <person name="Caoile C."/>
            <person name="Chan Y.M."/>
            <person name="Christensen M."/>
            <person name="Cleland C.A."/>
            <person name="Copeland A."/>
            <person name="Dalin E."/>
            <person name="Dehal P."/>
            <person name="Denys M."/>
            <person name="Detter J.C."/>
            <person name="Escobar J."/>
            <person name="Flowers D."/>
            <person name="Fotopulos D."/>
            <person name="Garcia C."/>
            <person name="Georgescu A.M."/>
            <person name="Glavina T."/>
            <person name="Gomez M."/>
            <person name="Gonzales E."/>
            <person name="Groza M."/>
            <person name="Hammon N."/>
            <person name="Hawkins T."/>
            <person name="Haydu L."/>
            <person name="Ho I."/>
            <person name="Huang W."/>
            <person name="Israni S."/>
            <person name="Jett J."/>
            <person name="Kadner K."/>
            <person name="Kimball H."/>
            <person name="Kobayashi A."/>
            <person name="Larionov V."/>
            <person name="Leem S.-H."/>
            <person name="Lopez F."/>
            <person name="Lou Y."/>
            <person name="Lowry S."/>
            <person name="Malfatti S."/>
            <person name="Martinez D."/>
            <person name="McCready P.M."/>
            <person name="Medina C."/>
            <person name="Morgan J."/>
            <person name="Nelson K."/>
            <person name="Nolan M."/>
            <person name="Ovcharenko I."/>
            <person name="Pitluck S."/>
            <person name="Pollard M."/>
            <person name="Popkie A.P."/>
            <person name="Predki P."/>
            <person name="Quan G."/>
            <person name="Ramirez L."/>
            <person name="Rash S."/>
            <person name="Retterer J."/>
            <person name="Rodriguez A."/>
            <person name="Rogers S."/>
            <person name="Salamov A."/>
            <person name="Salazar A."/>
            <person name="She X."/>
            <person name="Smith D."/>
            <person name="Slezak T."/>
            <person name="Solovyev V."/>
            <person name="Thayer N."/>
            <person name="Tice H."/>
            <person name="Tsai M."/>
            <person name="Ustaszewska A."/>
            <person name="Vo N."/>
            <person name="Wagner M."/>
            <person name="Wheeler J."/>
            <person name="Wu K."/>
            <person name="Xie G."/>
            <person name="Yang J."/>
            <person name="Dubchak I."/>
            <person name="Furey T.S."/>
            <person name="DeJong P."/>
            <person name="Dickson M."/>
            <person name="Gordon D."/>
            <person name="Eichler E.E."/>
            <person name="Pennacchio L.A."/>
            <person name="Richardson P."/>
            <person name="Stubbs L."/>
            <person name="Rokhsar D.S."/>
            <person name="Myers R.M."/>
            <person name="Rubin E.M."/>
            <person name="Lucas S.M."/>
        </authorList>
    </citation>
    <scope>NUCLEOTIDE SEQUENCE [LARGE SCALE GENOMIC DNA]</scope>
</reference>
<reference key="3">
    <citation type="journal article" date="1999" name="J. Cell Biol.">
        <title>The A-kinase-anchoring protein AKAP95 is a multivalent protein with a key role in chromatin condensation at mitosis.</title>
        <authorList>
            <person name="Collas P."/>
            <person name="Le Guellec K."/>
            <person name="Tasken K."/>
        </authorList>
    </citation>
    <scope>FUNCTION</scope>
    <scope>SUBCELLULAR LOCATION</scope>
    <scope>INTERACTION WITH PRKAR2A AND NCAPD2</scope>
</reference>
<reference key="4">
    <citation type="journal article" date="2000" name="J. Cell Biol.">
        <title>A kinase-anchoring protein (AKAP)95 recruits human chromosome-associated protein (hCAP)-D2/Eg7 for chromosome condensation in mitotic extract.</title>
        <authorList>
            <person name="Steen R.L."/>
            <person name="Cubizolles F."/>
            <person name="Le Guellec K."/>
            <person name="Collas P."/>
        </authorList>
    </citation>
    <scope>FUNCTION</scope>
</reference>
<reference key="5">
    <citation type="journal article" date="2000" name="J. Mol. Biol.">
        <title>Analysis of A-kinase anchoring protein (AKAP) interaction with protein kinase A (PKA) regulatory subunits: PKA isoform specificity in AKAP binding.</title>
        <authorList>
            <person name="Herberg F.W."/>
            <person name="Maleszka A."/>
            <person name="Eide T."/>
            <person name="Vossebein L."/>
            <person name="Tasken K."/>
        </authorList>
    </citation>
    <scope>INTERACTION WITH PRKAR2A</scope>
</reference>
<reference key="6">
    <citation type="journal article" date="2001" name="J. Cell Sci.">
        <title>Regulation of anchoring of the RIIalpha regulatory subunit of PKA to AKAP95 by threonine phosphorylation of RIIalpha: implications for chromosome dynamics at mitosis.</title>
        <authorList>
            <person name="Landsverk H.B."/>
            <person name="Carlson C.R."/>
            <person name="Steen R.L."/>
            <person name="Vossebein L."/>
            <person name="Herberg F.W."/>
            <person name="Tasken K."/>
            <person name="Collas P."/>
        </authorList>
    </citation>
    <scope>INTERACTION WITH PRKAR2A</scope>
</reference>
<reference key="7">
    <citation type="journal article" date="2002" name="EMBO Rep.">
        <title>Distinct but overlapping domains of AKAP95 are implicated in chromosome condensation and condensin targeting.</title>
        <authorList>
            <person name="Eide T."/>
            <person name="Carlson C."/>
            <person name="Tasken K.A."/>
            <person name="Hirano T."/>
            <person name="Tasken K."/>
            <person name="Collas P."/>
        </authorList>
    </citation>
    <scope>FUNCTION</scope>
    <scope>INTERACTION WITH NCAPD2</scope>
    <scope>MUTAGENESIS OF ILE-582</scope>
</reference>
<reference key="8">
    <citation type="journal article" date="2003" name="J. Biol. Chem.">
        <title>Protein kinase A-anchoring protein AKAP95 interacts with MCM2, a regulator of DNA replication.</title>
        <authorList>
            <person name="Eide T."/>
            <person name="Tasken K.A."/>
            <person name="Carlson C."/>
            <person name="Williams G."/>
            <person name="Jahnsen T."/>
            <person name="Tasken K."/>
            <person name="Collas P."/>
        </authorList>
    </citation>
    <scope>FUNCTION</scope>
    <scope>INTERACTION WITH MCM2</scope>
    <scope>MUTAGENESIS OF ILE-582</scope>
</reference>
<reference key="9">
    <citation type="journal article" date="2004" name="Biochem. J.">
        <title>A novel partner for D-type cyclins: protein kinase A-anchoring protein AKAP95.</title>
        <authorList>
            <person name="Arsenijevic T."/>
            <person name="Degraef C."/>
            <person name="Dumont J.E."/>
            <person name="Roger P.P."/>
            <person name="Pirson I."/>
        </authorList>
    </citation>
    <scope>FUNCTION</scope>
    <scope>INTERACTION WITH CCND1</scope>
</reference>
<reference key="10">
    <citation type="journal article" date="2004" name="J. Immunol.">
        <title>A-kinase anchoring proteins interact with phosphodiesterases in T lymphocyte cell lines.</title>
        <authorList>
            <person name="Asirvatham A.L."/>
            <person name="Galligan S.G."/>
            <person name="Schillace R.V."/>
            <person name="Davey M.P."/>
            <person name="Vasta V."/>
            <person name="Beavo J.A."/>
            <person name="Carr D.W."/>
        </authorList>
    </citation>
    <scope>INTERACTION WITH PDE4A</scope>
</reference>
<reference key="11">
    <citation type="journal article" date="2005" name="Mol. Cell. Biol.">
        <title>A-kinase-anchoring protein 95 functions as a potential carrier for the nuclear translocation of active caspase 3 through an enzyme-substrate-like association.</title>
        <authorList>
            <person name="Kamada S."/>
            <person name="Kikkawa U."/>
            <person name="Tsujimoto Y."/>
            <person name="Hunter T."/>
        </authorList>
    </citation>
    <scope>FUNCTION</scope>
    <scope>MUTAGENESIS OF ARG-290 AND 304-LYS-ARG-305</scope>
    <scope>NUCLEAR LOCALIZATION SIGNAL</scope>
</reference>
<reference key="12">
    <citation type="journal article" date="2006" name="Cell">
        <title>Global, in vivo, and site-specific phosphorylation dynamics in signaling networks.</title>
        <authorList>
            <person name="Olsen J.V."/>
            <person name="Blagoev B."/>
            <person name="Gnad F."/>
            <person name="Macek B."/>
            <person name="Kumar C."/>
            <person name="Mortensen P."/>
            <person name="Mann M."/>
        </authorList>
    </citation>
    <scope>PHOSPHORYLATION [LARGE SCALE ANALYSIS] AT SER-323; SER-328 AND SER-339</scope>
    <scope>IDENTIFICATION BY MASS SPECTROMETRY [LARGE SCALE ANALYSIS]</scope>
    <source>
        <tissue>Cervix carcinoma</tissue>
    </source>
</reference>
<reference key="13">
    <citation type="journal article" date="2006" name="Genes Dev.">
        <title>A novel histone deacetylase pathway regulates mitosis by modulating Aurora B kinase activity.</title>
        <authorList>
            <person name="Li Y."/>
            <person name="Kao G.D."/>
            <person name="Garcia B.A."/>
            <person name="Shabanowitz J."/>
            <person name="Hunt D.F."/>
            <person name="Qin J."/>
            <person name="Phelan C."/>
            <person name="Lazar M.A."/>
        </authorList>
    </citation>
    <scope>FUNCTION</scope>
    <scope>INTERACTION WITH HDAC3</scope>
</reference>
<reference key="14">
    <citation type="journal article" date="2008" name="Mol. Cell">
        <title>Kinase-selective enrichment enables quantitative phosphoproteomics of the kinome across the cell cycle.</title>
        <authorList>
            <person name="Daub H."/>
            <person name="Olsen J.V."/>
            <person name="Bairlein M."/>
            <person name="Gnad F."/>
            <person name="Oppermann F.S."/>
            <person name="Korner R."/>
            <person name="Greff Z."/>
            <person name="Keri G."/>
            <person name="Stemmann O."/>
            <person name="Mann M."/>
        </authorList>
    </citation>
    <scope>PHOSPHORYLATION [LARGE SCALE ANALYSIS] AT SER-328</scope>
    <scope>IDENTIFICATION BY MASS SPECTROMETRY [LARGE SCALE ANALYSIS]</scope>
    <source>
        <tissue>Cervix carcinoma</tissue>
    </source>
</reference>
<reference key="15">
    <citation type="journal article" date="2008" name="Proc. Natl. Acad. Sci. U.S.A.">
        <title>A quantitative atlas of mitotic phosphorylation.</title>
        <authorList>
            <person name="Dephoure N."/>
            <person name="Zhou C."/>
            <person name="Villen J."/>
            <person name="Beausoleil S.A."/>
            <person name="Bakalarski C.E."/>
            <person name="Elledge S.J."/>
            <person name="Gygi S.P."/>
        </authorList>
    </citation>
    <scope>PHOSPHORYLATION [LARGE SCALE ANALYSIS] AT SER-323; SER-328 AND SER-339</scope>
    <scope>IDENTIFICATION BY MASS SPECTROMETRY [LARGE SCALE ANALYSIS]</scope>
    <source>
        <tissue>Cervix carcinoma</tissue>
    </source>
</reference>
<reference key="16">
    <citation type="journal article" date="2009" name="Anal. Chem.">
        <title>Lys-N and trypsin cover complementary parts of the phosphoproteome in a refined SCX-based approach.</title>
        <authorList>
            <person name="Gauci S."/>
            <person name="Helbig A.O."/>
            <person name="Slijper M."/>
            <person name="Krijgsveld J."/>
            <person name="Heck A.J."/>
            <person name="Mohammed S."/>
        </authorList>
    </citation>
    <scope>IDENTIFICATION BY MASS SPECTROMETRY [LARGE SCALE ANALYSIS]</scope>
</reference>
<reference key="17">
    <citation type="journal article" date="2009" name="PLoS ONE">
        <title>A-kinase anchoring in dendritic cells is required for antigen presentation.</title>
        <authorList>
            <person name="Schillace R.V."/>
            <person name="Miller C.L."/>
            <person name="Pisenti N."/>
            <person name="Grotzke J.E."/>
            <person name="Swarbrick G.M."/>
            <person name="Lewinsohn D.M."/>
            <person name="Carr D.W."/>
        </authorList>
    </citation>
    <scope>TISSUE SPECIFICITY</scope>
    <scope>SUBCELLULAR LOCATION</scope>
</reference>
<reference key="18">
    <citation type="journal article" date="2009" name="Sci. Signal.">
        <title>Quantitative phosphoproteomic analysis of T cell receptor signaling reveals system-wide modulation of protein-protein interactions.</title>
        <authorList>
            <person name="Mayya V."/>
            <person name="Lundgren D.H."/>
            <person name="Hwang S.-I."/>
            <person name="Rezaul K."/>
            <person name="Wu L."/>
            <person name="Eng J.K."/>
            <person name="Rodionov V."/>
            <person name="Han D.K."/>
        </authorList>
    </citation>
    <scope>PHOSPHORYLATION [LARGE SCALE ANALYSIS] AT SER-323 AND SER-328</scope>
    <scope>IDENTIFICATION BY MASS SPECTROMETRY [LARGE SCALE ANALYSIS]</scope>
    <source>
        <tissue>Leukemic T-cell</tissue>
    </source>
</reference>
<reference key="19">
    <citation type="journal article" date="2010" name="Sci. Signal.">
        <title>Quantitative phosphoproteomics reveals widespread full phosphorylation site occupancy during mitosis.</title>
        <authorList>
            <person name="Olsen J.V."/>
            <person name="Vermeulen M."/>
            <person name="Santamaria A."/>
            <person name="Kumar C."/>
            <person name="Miller M.L."/>
            <person name="Jensen L.J."/>
            <person name="Gnad F."/>
            <person name="Cox J."/>
            <person name="Jensen T.S."/>
            <person name="Nigg E.A."/>
            <person name="Brunak S."/>
            <person name="Mann M."/>
        </authorList>
    </citation>
    <scope>PHOSPHORYLATION [LARGE SCALE ANALYSIS] AT SER-323 AND SER-328</scope>
    <scope>IDENTIFICATION BY MASS SPECTROMETRY [LARGE SCALE ANALYSIS]</scope>
    <source>
        <tissue>Cervix carcinoma</tissue>
    </source>
</reference>
<reference key="20">
    <citation type="journal article" date="2011" name="BMC Syst. Biol.">
        <title>Initial characterization of the human central proteome.</title>
        <authorList>
            <person name="Burkard T.R."/>
            <person name="Planyavsky M."/>
            <person name="Kaupe I."/>
            <person name="Breitwieser F.P."/>
            <person name="Buerckstuemmer T."/>
            <person name="Bennett K.L."/>
            <person name="Superti-Furga G."/>
            <person name="Colinge J."/>
        </authorList>
    </citation>
    <scope>IDENTIFICATION BY MASS SPECTROMETRY [LARGE SCALE ANALYSIS]</scope>
</reference>
<reference key="21">
    <citation type="journal article" date="2011" name="Sci. Signal.">
        <title>System-wide temporal characterization of the proteome and phosphoproteome of human embryonic stem cell differentiation.</title>
        <authorList>
            <person name="Rigbolt K.T."/>
            <person name="Prokhorova T.A."/>
            <person name="Akimov V."/>
            <person name="Henningsen J."/>
            <person name="Johansen P.T."/>
            <person name="Kratchmarova I."/>
            <person name="Kassem M."/>
            <person name="Mann M."/>
            <person name="Olsen J.V."/>
            <person name="Blagoev B."/>
        </authorList>
    </citation>
    <scope>PHOSPHORYLATION [LARGE SCALE ANALYSIS] AT SER-112; SER-323; SER-328 AND SER-339</scope>
    <scope>IDENTIFICATION BY MASS SPECTROMETRY [LARGE SCALE ANALYSIS]</scope>
</reference>
<reference key="22">
    <citation type="journal article" date="2012" name="Mol. Biol. Cell">
        <title>Localization and retention of p90 ribosomal S6 kinase 1 in the nucleus: implications for its function.</title>
        <authorList>
            <person name="Gao X."/>
            <person name="Chaturvedi D."/>
            <person name="Patel T.B."/>
        </authorList>
    </citation>
    <scope>FUNCTION</scope>
    <scope>INTERACTION WITH RPS6KA1</scope>
</reference>
<reference key="23">
    <citation type="journal article" date="2013" name="J. Proteome Res.">
        <title>Toward a comprehensive characterization of a human cancer cell phosphoproteome.</title>
        <authorList>
            <person name="Zhou H."/>
            <person name="Di Palma S."/>
            <person name="Preisinger C."/>
            <person name="Peng M."/>
            <person name="Polat A.N."/>
            <person name="Heck A.J."/>
            <person name="Mohammed S."/>
        </authorList>
    </citation>
    <scope>PHOSPHORYLATION [LARGE SCALE ANALYSIS] AT SER-199; SER-323; SER-328 AND SER-685</scope>
    <scope>IDENTIFICATION BY MASS SPECTROMETRY [LARGE SCALE ANALYSIS]</scope>
    <source>
        <tissue>Cervix carcinoma</tissue>
        <tissue>Erythroleukemia</tissue>
    </source>
</reference>
<reference key="24">
    <citation type="journal article" date="2013" name="Nat. Struct. Mol. Biol.">
        <title>Regulation of transcription by the MLL2 complex and MLL complex-associated AKAP95.</title>
        <authorList>
            <person name="Jiang H."/>
            <person name="Lu X."/>
            <person name="Shimada M."/>
            <person name="Dou Y."/>
            <person name="Tang Z."/>
            <person name="Roeder R.G."/>
        </authorList>
    </citation>
    <scope>FUNCTION</scope>
    <scope>INTERACTION WITH DPY30</scope>
    <scope>SUBUNIT</scope>
</reference>
<reference key="25">
    <citation type="journal article" date="2014" name="J. Proteomics">
        <title>An enzyme assisted RP-RPLC approach for in-depth analysis of human liver phosphoproteome.</title>
        <authorList>
            <person name="Bian Y."/>
            <person name="Song C."/>
            <person name="Cheng K."/>
            <person name="Dong M."/>
            <person name="Wang F."/>
            <person name="Huang J."/>
            <person name="Sun D."/>
            <person name="Wang L."/>
            <person name="Ye M."/>
            <person name="Zou H."/>
        </authorList>
    </citation>
    <scope>PHOSPHORYLATION [LARGE SCALE ANALYSIS] AT SER-323 AND SER-328</scope>
    <scope>IDENTIFICATION BY MASS SPECTROMETRY [LARGE SCALE ANALYSIS]</scope>
    <source>
        <tissue>Liver</tissue>
    </source>
</reference>
<reference key="26">
    <citation type="journal article" date="2014" name="Mol. Cell. Proteomics">
        <title>Immunoaffinity enrichment and mass spectrometry analysis of protein methylation.</title>
        <authorList>
            <person name="Guo A."/>
            <person name="Gu H."/>
            <person name="Zhou J."/>
            <person name="Mulhern D."/>
            <person name="Wang Y."/>
            <person name="Lee K.A."/>
            <person name="Yang V."/>
            <person name="Aguiar M."/>
            <person name="Kornhauser J."/>
            <person name="Jia X."/>
            <person name="Ren J."/>
            <person name="Beausoleil S.A."/>
            <person name="Silva J.C."/>
            <person name="Vemulapalli V."/>
            <person name="Bedford M.T."/>
            <person name="Comb M.J."/>
        </authorList>
    </citation>
    <scope>METHYLATION [LARGE SCALE ANALYSIS] AT ARG-277</scope>
    <scope>IDENTIFICATION BY MASS SPECTROMETRY [LARGE SCALE ANALYSIS]</scope>
    <source>
        <tissue>Colon carcinoma</tissue>
    </source>
</reference>
<reference key="27">
    <citation type="journal article" date="2015" name="J. Biol. Chem.">
        <title>Role for tyrosine phosphorylation of a-kinase anchoring protein 8 (AKAP8) in its dissociation from chromatin and the nuclear matrix.</title>
        <authorList>
            <person name="Kubota S."/>
            <person name="Morii M."/>
            <person name="Yuki R."/>
            <person name="Yamaguchi N."/>
            <person name="Yamaguchi H."/>
            <person name="Aoyama K."/>
            <person name="Kuga T."/>
            <person name="Tomonaga T."/>
            <person name="Yamaguchi N."/>
        </authorList>
    </citation>
    <scope>PHOSPHORYLATION</scope>
</reference>
<reference key="28">
    <citation type="journal article" date="2016" name="FEBS J.">
        <title>A-kinase anchoring protein AKAP95 is a novel regulator of ribosomal RNA synthesis.</title>
        <authorList>
            <person name="Marstad A."/>
            <person name="Landsverk O.J."/>
            <person name="Stroemme O."/>
            <person name="Otterlei M."/>
            <person name="Collas P."/>
            <person name="Sundan A."/>
            <person name="Brede G."/>
        </authorList>
    </citation>
    <scope>FUNCTION</scope>
    <scope>SUBCELLULAR LOCATION</scope>
</reference>
<reference key="29">
    <citation type="journal article" date="2016" name="Sci. Rep.">
        <title>Dynamic changes in protein interaction between AKAP95 and Cx43 during cell cycle progression of A549 cells.</title>
        <authorList>
            <person name="Chen X."/>
            <person name="Kong X."/>
            <person name="Zhuang W."/>
            <person name="Teng B."/>
            <person name="Yu X."/>
            <person name="Hua S."/>
            <person name="Wang S."/>
            <person name="Liang F."/>
            <person name="Ma D."/>
            <person name="Zhang S."/>
            <person name="Zou X."/>
            <person name="Dai Y."/>
            <person name="Yang W."/>
            <person name="Zhang Y."/>
        </authorList>
    </citation>
    <scope>INTERACTION WITH GJA1</scope>
    <scope>FUNCTION</scope>
    <scope>SUBCELLULAR LOCATION</scope>
</reference>
<reference key="30">
    <citation type="journal article" date="2017" name="Nat. Struct. Mol. Biol.">
        <title>Site-specific mapping of the human SUMO proteome reveals co-modification with phosphorylation.</title>
        <authorList>
            <person name="Hendriks I.A."/>
            <person name="Lyon D."/>
            <person name="Young C."/>
            <person name="Jensen L.J."/>
            <person name="Vertegaal A.C."/>
            <person name="Nielsen M.L."/>
        </authorList>
    </citation>
    <scope>SUMOYLATION [LARGE SCALE ANALYSIS] AT LYS-317 AND LYS-567</scope>
    <scope>IDENTIFICATION BY MASS SPECTROMETRY [LARGE SCALE ANALYSIS]</scope>
</reference>
<reference key="31">
    <citation type="journal article" date="2006" name="Science">
        <title>The consensus coding sequences of human breast and colorectal cancers.</title>
        <authorList>
            <person name="Sjoeblom T."/>
            <person name="Jones S."/>
            <person name="Wood L.D."/>
            <person name="Parsons D.W."/>
            <person name="Lin J."/>
            <person name="Barber T.D."/>
            <person name="Mandelker D."/>
            <person name="Leary R.J."/>
            <person name="Ptak J."/>
            <person name="Silliman N."/>
            <person name="Szabo S."/>
            <person name="Buckhaults P."/>
            <person name="Farrell C."/>
            <person name="Meeh P."/>
            <person name="Markowitz S.D."/>
            <person name="Willis J."/>
            <person name="Dawson D."/>
            <person name="Willson J.K.V."/>
            <person name="Gazdar A.F."/>
            <person name="Hartigan J."/>
            <person name="Wu L."/>
            <person name="Liu C."/>
            <person name="Parmigiani G."/>
            <person name="Park B.H."/>
            <person name="Bachman K.E."/>
            <person name="Papadopoulos N."/>
            <person name="Vogelstein B."/>
            <person name="Kinzler K.W."/>
            <person name="Velculescu V.E."/>
        </authorList>
    </citation>
    <scope>VARIANT [LARGE SCALE ANALYSIS] HIS-664</scope>
</reference>
<name>AKAP8_HUMAN</name>
<accession>O43823</accession>
<comment type="function">
    <text evidence="2 3 6 8 10 16 18 21 22 24 26">Anchoring protein that mediates the subcellular compartmentation of cAMP-dependent protein kinase (PKA type II) (PubMed:9473338). Acts as an anchor for a PKA-signaling complex onto mitotic chromosomes, which is required for maintenance of chromosomes in a condensed form throughout mitosis. Recruits condensin complex subunit NCAPD2 to chromosomes required for chromatin condensation; the function appears to be independent from PKA-anchoring (PubMed:10601332, PubMed:10791967, PubMed:11964380). May help to deliver cyclin D/E to CDK4 to facilitate cell cycle progression (PubMed:14641107). Required for cell cycle G2/M transition and histone deacetylation during mitosis. In mitotic cells recruits HDAC3 to the vicinity of chromatin leading to deacetylation and subsequent phosphorylation at 'Ser-10' of histone H3; in this function may act redundantly with AKAP8L (PubMed:16980585). Involved in nuclear retention of RPS6KA1 upon ERK activation thus inducing cell proliferation (PubMed:22130794). May be involved in regulation of DNA replication by acting as scaffold for MCM2 (PubMed:12740381). Enhances HMT activity of the KMT2 family MLL4/WBP7 complex and is involved in transcriptional regulation. In a teratocarcinoma cell line is involved in retinoic acid-mediated induction of developmental genes implicating H3 'Lys-4' methylation (PubMed:23995757). May be involved in recruitment of active CASP3 to the nucleus in apoptotic cells (PubMed:16227597). May act as a carrier protein of GJA1 for its transport to the nucleus (PubMed:26880274). May play a repressive role in the regulation of rDNA transcription. Preferentially binds GC-rich DNA in vitro. In cells, associates with ribosomal RNA (rRNA) chromatin, preferentially with rRNA promoter and transcribed regions (PubMed:26683827). Involved in modulation of Toll-like receptor signaling. Required for the cAMP-dependent suppression of TNF-alpha in early stages of LPS-induced macrophage activation; the function probably implicates targeting of PKA to NFKB1 (By similarity).</text>
</comment>
<comment type="subunit">
    <text evidence="1 2 3 6 7 9 10 11 12 13 16 18 19 22 23 25">Binds to the PKA RII-alpha regulatory subunit PRKAR2A (phosphorylated at 'Thr-54') during mitosis (PubMed:10601332, PubMed:10764601, PubMed:11591814, PubMed:9473338). Interacts (via C-terminus) with FIGN (By similarity). Interacts with NCAPD2, CCND1, MCM2, RPS6KA1, PDE4A (PubMed:10601332, PubMed:11591814, PubMed:11964380, PubMed:12740381, PubMed:14641107, PubMed:15470020, PubMed:22130794). Interacts with CCND3, CCNE1, DDX5, CASP3. Interacts with NFKB1; detetcted in the cytoplasm. Interacts with MYCBP; MYCBP is translocated to the nucleus and the interaction prevents the association of the PKA catalytic subunit leading to suppression of PKA activity (By similarity). Interacts with DPY30; mediating AKAP8 association with at least the MLL4/WBP7 HMT complex (PubMed:23995757). Interacts with HDAC3; increased during mitosis (PubMed:16980585). Interacts with GJA1; in the nucleus and in the nuclear membrane; the nuclear association increases with progress of cell cycle G1, S and G2 phase and decreases in M phase (PubMed:26880274).</text>
</comment>
<comment type="interaction">
    <interactant intactId="EBI-1237481">
        <id>O43823</id>
    </interactant>
    <interactant intactId="EBI-540797">
        <id>Q9UBL3</id>
        <label>ASH2L</label>
    </interactant>
    <organismsDiffer>false</organismsDiffer>
    <experiments>3</experiments>
</comment>
<comment type="interaction">
    <interactant intactId="EBI-1237481">
        <id>O43823</id>
    </interactant>
    <interactant intactId="EBI-524064">
        <id>P42574</id>
        <label>CASP3</label>
    </interactant>
    <organismsDiffer>false</organismsDiffer>
    <experiments>5</experiments>
</comment>
<comment type="interaction">
    <interactant intactId="EBI-1237481">
        <id>O43823</id>
    </interactant>
    <interactant intactId="EBI-744973">
        <id>Q9C005</id>
        <label>DPY30</label>
    </interactant>
    <organismsDiffer>false</organismsDiffer>
    <experiments>7</experiments>
</comment>
<comment type="interaction">
    <interactant intactId="EBI-1237481">
        <id>O43823</id>
    </interactant>
    <interactant intactId="EBI-607682">
        <id>O15379</id>
        <label>HDAC3</label>
    </interactant>
    <organismsDiffer>false</organismsDiffer>
    <experiments>10</experiments>
</comment>
<comment type="interaction">
    <interactant intactId="EBI-1237481">
        <id>O43823</id>
    </interactant>
    <interactant intactId="EBI-374819">
        <id>P49736</id>
        <label>MCM2</label>
    </interactant>
    <organismsDiffer>false</organismsDiffer>
    <experiments>7</experiments>
</comment>
<comment type="interaction">
    <interactant intactId="EBI-1237481">
        <id>O43823</id>
    </interactant>
    <interactant intactId="EBI-716185">
        <id>Q99417</id>
        <label>MYCBP</label>
    </interactant>
    <organismsDiffer>false</organismsDiffer>
    <experiments>3</experiments>
</comment>
<comment type="interaction">
    <interactant intactId="EBI-1237481">
        <id>O43823</id>
    </interactant>
    <interactant intactId="EBI-2556122">
        <id>P13861</id>
        <label>PRKAR2A</label>
    </interactant>
    <organismsDiffer>false</organismsDiffer>
    <experiments>3</experiments>
</comment>
<comment type="interaction">
    <interactant intactId="EBI-1237481">
        <id>O43823</id>
    </interactant>
    <interactant intactId="EBI-963034">
        <id>Q15418</id>
        <label>RPS6KA1</label>
    </interactant>
    <organismsDiffer>false</organismsDiffer>
    <experiments>5</experiments>
</comment>
<comment type="interaction">
    <interactant intactId="EBI-1237481">
        <id>O43823</id>
    </interactant>
    <interactant intactId="EBI-540834">
        <id>P61964</id>
        <label>WDR5</label>
    </interactant>
    <organismsDiffer>false</organismsDiffer>
    <experiments>3</experiments>
</comment>
<comment type="subcellular location">
    <subcellularLocation>
        <location evidence="17 21">Nucleus</location>
    </subcellularLocation>
    <subcellularLocation>
        <location evidence="6">Nucleus matrix</location>
    </subcellularLocation>
    <subcellularLocation>
        <location evidence="21">Nucleus</location>
        <location evidence="21">Nucleolus</location>
    </subcellularLocation>
    <subcellularLocation>
        <location evidence="3">Cytoplasm</location>
    </subcellularLocation>
    <text evidence="6 21 22">Associated with the nuclear matrix in interphase and redistributes mostly to chromatin at mitosis. However, mitotic chromatin localization has been questioned. Upon nuclear reassembly at the end of mitosis, is sequestered into the daughter nuclei where it re-acquires an interphase distribution. Exhibits partial localization to the nucleolus in interphase, where it colocalizes with UBTF/UBF, suggesting localization to the fibrillary center and/or to the dense fibrillary component. Colocalizes with GJA1 at the nuclear membrane specifically during cell cycle G1/S phase.</text>
</comment>
<comment type="tissue specificity">
    <text evidence="17">Highly expressed in heart, liver, skeletal muscle, kidney and pancreas. Expressed in mature dendritic cells.</text>
</comment>
<comment type="PTM">
    <text evidence="20">Phosphorylated on tyrosine residues probably by SRC subfamily protein kinases; multiple phosphorylation is leading to dissociation from nuclear structures implicated in chromatin structural changes.</text>
</comment>
<comment type="similarity">
    <text evidence="4">Belongs to the AKAP95 family.</text>
</comment>
<gene>
    <name type="primary">AKAP8</name>
    <name type="synonym">AKAP95</name>
</gene>
<organism>
    <name type="scientific">Homo sapiens</name>
    <name type="common">Human</name>
    <dbReference type="NCBI Taxonomy" id="9606"/>
    <lineage>
        <taxon>Eukaryota</taxon>
        <taxon>Metazoa</taxon>
        <taxon>Chordata</taxon>
        <taxon>Craniata</taxon>
        <taxon>Vertebrata</taxon>
        <taxon>Euteleostomi</taxon>
        <taxon>Mammalia</taxon>
        <taxon>Eutheria</taxon>
        <taxon>Euarchontoglires</taxon>
        <taxon>Primates</taxon>
        <taxon>Haplorrhini</taxon>
        <taxon>Catarrhini</taxon>
        <taxon>Hominidae</taxon>
        <taxon>Homo</taxon>
    </lineage>
</organism>
<feature type="chain" id="PRO_0000075381" description="A-kinase anchor protein 8">
    <location>
        <begin position="1"/>
        <end position="692"/>
    </location>
</feature>
<feature type="zinc finger region" description="C2H2 AKAP95-type 1" evidence="4">
    <location>
        <begin position="392"/>
        <end position="414"/>
    </location>
</feature>
<feature type="zinc finger region" description="C2H2 AKAP95-type 2" evidence="4">
    <location>
        <begin position="481"/>
        <end position="504"/>
    </location>
</feature>
<feature type="region of interest" description="Interaction with DPY30" evidence="19">
    <location>
        <begin position="1"/>
        <end position="210"/>
    </location>
</feature>
<feature type="region of interest" description="Interaction with MCM2" evidence="11">
    <location>
        <begin position="1"/>
        <end position="195"/>
    </location>
</feature>
<feature type="region of interest" description="Interaction with DDX5" evidence="2">
    <location>
        <begin position="109"/>
        <end position="201"/>
    </location>
</feature>
<feature type="region of interest" description="Disordered" evidence="5">
    <location>
        <begin position="168"/>
        <end position="203"/>
    </location>
</feature>
<feature type="region of interest" description="Disordered" evidence="5">
    <location>
        <begin position="231"/>
        <end position="254"/>
    </location>
</feature>
<feature type="region of interest" description="Disordered" evidence="5">
    <location>
        <begin position="269"/>
        <end position="382"/>
    </location>
</feature>
<feature type="region of interest" description="Involved in chromatin-binding" evidence="10">
    <location>
        <begin position="387"/>
        <end position="450"/>
    </location>
</feature>
<feature type="region of interest" description="Involved in condensin complex recruitment" evidence="10">
    <location>
        <begin position="525"/>
        <end position="569"/>
    </location>
</feature>
<feature type="region of interest" description="Disordered" evidence="5">
    <location>
        <begin position="545"/>
        <end position="571"/>
    </location>
</feature>
<feature type="region of interest" description="RII-binding" evidence="2">
    <location>
        <begin position="572"/>
        <end position="589"/>
    </location>
</feature>
<feature type="region of interest" description="Required for interaction with MYCBP" evidence="3">
    <location>
        <begin position="576"/>
        <end position="593"/>
    </location>
</feature>
<feature type="region of interest" description="Disordered" evidence="5">
    <location>
        <begin position="592"/>
        <end position="692"/>
    </location>
</feature>
<feature type="short sequence motif" description="Bipartite nuclear localization signal" evidence="2 25">
    <location>
        <begin position="289"/>
        <end position="306"/>
    </location>
</feature>
<feature type="compositionally biased region" description="Basic and acidic residues" evidence="5">
    <location>
        <begin position="172"/>
        <end position="182"/>
    </location>
</feature>
<feature type="compositionally biased region" description="Basic and acidic residues" evidence="5">
    <location>
        <begin position="281"/>
        <end position="297"/>
    </location>
</feature>
<feature type="compositionally biased region" description="Basic and acidic residues" evidence="5">
    <location>
        <begin position="314"/>
        <end position="323"/>
    </location>
</feature>
<feature type="compositionally biased region" description="Acidic residues" evidence="5">
    <location>
        <begin position="324"/>
        <end position="334"/>
    </location>
</feature>
<feature type="compositionally biased region" description="Acidic residues" evidence="5">
    <location>
        <begin position="551"/>
        <end position="562"/>
    </location>
</feature>
<feature type="compositionally biased region" description="Basic and acidic residues" evidence="5">
    <location>
        <begin position="634"/>
        <end position="646"/>
    </location>
</feature>
<feature type="compositionally biased region" description="Low complexity" evidence="5">
    <location>
        <begin position="663"/>
        <end position="675"/>
    </location>
</feature>
<feature type="compositionally biased region" description="Basic and acidic residues" evidence="5">
    <location>
        <begin position="683"/>
        <end position="692"/>
    </location>
</feature>
<feature type="modified residue" description="Asymmetric dimethylarginine; alternate" evidence="3">
    <location>
        <position position="109"/>
    </location>
</feature>
<feature type="modified residue" description="Omega-N-methylarginine; alternate" evidence="3">
    <location>
        <position position="109"/>
    </location>
</feature>
<feature type="modified residue" description="Phosphoserine" evidence="32">
    <location>
        <position position="112"/>
    </location>
</feature>
<feature type="modified residue" description="Phosphoserine" evidence="33">
    <location>
        <position position="199"/>
    </location>
</feature>
<feature type="modified residue" description="Omega-N-methylarginine" evidence="3">
    <location>
        <position position="233"/>
    </location>
</feature>
<feature type="modified residue" description="Omega-N-methylarginine" evidence="34">
    <location>
        <position position="277"/>
    </location>
</feature>
<feature type="modified residue" description="Phosphoserine" evidence="27 28 30 31 32 33 35">
    <location>
        <position position="323"/>
    </location>
</feature>
<feature type="modified residue" description="Phosphoserine" evidence="27 28 29 30 31 32 33 35">
    <location>
        <position position="328"/>
    </location>
</feature>
<feature type="modified residue" description="Phosphoserine" evidence="27 28 32">
    <location>
        <position position="339"/>
    </location>
</feature>
<feature type="modified residue" description="Phosphoserine" evidence="2">
    <location>
        <position position="662"/>
    </location>
</feature>
<feature type="modified residue" description="Phosphoserine" evidence="33">
    <location>
        <position position="685"/>
    </location>
</feature>
<feature type="cross-link" description="Glycyl lysine isopeptide (Lys-Gly) (interchain with G-Cter in SUMO2)" evidence="36">
    <location>
        <position position="317"/>
    </location>
</feature>
<feature type="cross-link" description="Glycyl lysine isopeptide (Lys-Gly) (interchain with G-Cter in SUMO2)" evidence="36">
    <location>
        <position position="567"/>
    </location>
</feature>
<feature type="sequence variant" id="VAR_036534" description="In a breast cancer sample; somatic mutation." evidence="15">
    <original>Q</original>
    <variation>H</variation>
    <location>
        <position position="664"/>
    </location>
</feature>
<feature type="mutagenesis site" description="No nuclear localization; when associated with 304-N-S-305." evidence="14">
    <original>R</original>
    <variation>S</variation>
    <location>
        <position position="290"/>
    </location>
</feature>
<feature type="mutagenesis site" description="No nuclear localization; when associated with S-290." evidence="14">
    <original>KR</original>
    <variation>NS</variation>
    <location>
        <begin position="304"/>
        <end position="305"/>
    </location>
</feature>
<feature type="mutagenesis site" description="Abolishes chromosome-condensation activity; when associated with S-395." evidence="10">
    <original>C</original>
    <variation>S</variation>
    <location>
        <position position="392"/>
    </location>
</feature>
<feature type="mutagenesis site" description="Abolishes chromosome-condensation activity; when associated with S-392." evidence="10">
    <original>C</original>
    <variation>S</variation>
    <location>
        <position position="395"/>
    </location>
</feature>
<feature type="mutagenesis site" description="Abolishes chromosome-condensation activity and recruitment of condensin complex; when associated with S-484." evidence="10">
    <original>C</original>
    <variation>S</variation>
    <location>
        <position position="481"/>
    </location>
</feature>
<feature type="mutagenesis site" description="Abolishes chromosome-condensation activity and recruitment of condensin complex; when associated with S-481." evidence="10">
    <original>C</original>
    <variation>S</variation>
    <location>
        <position position="484"/>
    </location>
</feature>
<feature type="mutagenesis site" description="No effect on activity to regulate DNA replication and on condensin complex recruitment." evidence="10 11">
    <original>I</original>
    <variation>P</variation>
    <location>
        <position position="582"/>
    </location>
</feature>
<evidence type="ECO:0000250" key="1">
    <source>
        <dbReference type="UniProtKB" id="Q5VK71"/>
    </source>
</evidence>
<evidence type="ECO:0000250" key="2">
    <source>
        <dbReference type="UniProtKB" id="Q63014"/>
    </source>
</evidence>
<evidence type="ECO:0000250" key="3">
    <source>
        <dbReference type="UniProtKB" id="Q9DBR0"/>
    </source>
</evidence>
<evidence type="ECO:0000255" key="4">
    <source>
        <dbReference type="PROSITE-ProRule" id="PRU01140"/>
    </source>
</evidence>
<evidence type="ECO:0000256" key="5">
    <source>
        <dbReference type="SAM" id="MobiDB-lite"/>
    </source>
</evidence>
<evidence type="ECO:0000269" key="6">
    <source>
    </source>
</evidence>
<evidence type="ECO:0000269" key="7">
    <source>
    </source>
</evidence>
<evidence type="ECO:0000269" key="8">
    <source>
    </source>
</evidence>
<evidence type="ECO:0000269" key="9">
    <source>
    </source>
</evidence>
<evidence type="ECO:0000269" key="10">
    <source>
    </source>
</evidence>
<evidence type="ECO:0000269" key="11">
    <source>
    </source>
</evidence>
<evidence type="ECO:0000269" key="12">
    <source>
    </source>
</evidence>
<evidence type="ECO:0000269" key="13">
    <source>
    </source>
</evidence>
<evidence type="ECO:0000269" key="14">
    <source>
    </source>
</evidence>
<evidence type="ECO:0000269" key="15">
    <source>
    </source>
</evidence>
<evidence type="ECO:0000269" key="16">
    <source>
    </source>
</evidence>
<evidence type="ECO:0000269" key="17">
    <source>
    </source>
</evidence>
<evidence type="ECO:0000269" key="18">
    <source>
    </source>
</evidence>
<evidence type="ECO:0000269" key="19">
    <source>
    </source>
</evidence>
<evidence type="ECO:0000269" key="20">
    <source>
    </source>
</evidence>
<evidence type="ECO:0000269" key="21">
    <source>
    </source>
</evidence>
<evidence type="ECO:0000269" key="22">
    <source>
    </source>
</evidence>
<evidence type="ECO:0000269" key="23">
    <source>
    </source>
</evidence>
<evidence type="ECO:0000305" key="24">
    <source>
    </source>
</evidence>
<evidence type="ECO:0000305" key="25">
    <source>
    </source>
</evidence>
<evidence type="ECO:0000305" key="26">
    <source>
    </source>
</evidence>
<evidence type="ECO:0007744" key="27">
    <source>
    </source>
</evidence>
<evidence type="ECO:0007744" key="28">
    <source>
    </source>
</evidence>
<evidence type="ECO:0007744" key="29">
    <source>
    </source>
</evidence>
<evidence type="ECO:0007744" key="30">
    <source>
    </source>
</evidence>
<evidence type="ECO:0007744" key="31">
    <source>
    </source>
</evidence>
<evidence type="ECO:0007744" key="32">
    <source>
    </source>
</evidence>
<evidence type="ECO:0007744" key="33">
    <source>
    </source>
</evidence>
<evidence type="ECO:0007744" key="34">
    <source>
    </source>
</evidence>
<evidence type="ECO:0007744" key="35">
    <source>
    </source>
</evidence>
<evidence type="ECO:0007744" key="36">
    <source>
    </source>
</evidence>
<keyword id="KW-0963">Cytoplasm</keyword>
<keyword id="KW-0238">DNA-binding</keyword>
<keyword id="KW-0391">Immunity</keyword>
<keyword id="KW-0399">Innate immunity</keyword>
<keyword id="KW-1017">Isopeptide bond</keyword>
<keyword id="KW-0479">Metal-binding</keyword>
<keyword id="KW-0488">Methylation</keyword>
<keyword id="KW-0539">Nucleus</keyword>
<keyword id="KW-0597">Phosphoprotein</keyword>
<keyword id="KW-0653">Protein transport</keyword>
<keyword id="KW-1267">Proteomics identification</keyword>
<keyword id="KW-1185">Reference proteome</keyword>
<keyword id="KW-0677">Repeat</keyword>
<keyword id="KW-0804">Transcription</keyword>
<keyword id="KW-0805">Transcription regulation</keyword>
<keyword id="KW-0813">Transport</keyword>
<keyword id="KW-0832">Ubl conjugation</keyword>
<keyword id="KW-0862">Zinc</keyword>
<keyword id="KW-0863">Zinc-finger</keyword>